<evidence type="ECO:0000255" key="1">
    <source>
        <dbReference type="HAMAP-Rule" id="MF_00059"/>
    </source>
</evidence>
<organism>
    <name type="scientific">Haemophilus influenzae (strain PittEE)</name>
    <dbReference type="NCBI Taxonomy" id="374930"/>
    <lineage>
        <taxon>Bacteria</taxon>
        <taxon>Pseudomonadati</taxon>
        <taxon>Pseudomonadota</taxon>
        <taxon>Gammaproteobacteria</taxon>
        <taxon>Pasteurellales</taxon>
        <taxon>Pasteurellaceae</taxon>
        <taxon>Haemophilus</taxon>
    </lineage>
</organism>
<name>RPOA_HAEIE</name>
<keyword id="KW-0240">DNA-directed RNA polymerase</keyword>
<keyword id="KW-0548">Nucleotidyltransferase</keyword>
<keyword id="KW-0804">Transcription</keyword>
<keyword id="KW-0808">Transferase</keyword>
<reference key="1">
    <citation type="journal article" date="2007" name="Genome Biol.">
        <title>Characterization and modeling of the Haemophilus influenzae core and supragenomes based on the complete genomic sequences of Rd and 12 clinical nontypeable strains.</title>
        <authorList>
            <person name="Hogg J.S."/>
            <person name="Hu F.Z."/>
            <person name="Janto B."/>
            <person name="Boissy R."/>
            <person name="Hayes J."/>
            <person name="Keefe R."/>
            <person name="Post J.C."/>
            <person name="Ehrlich G.D."/>
        </authorList>
    </citation>
    <scope>NUCLEOTIDE SEQUENCE [LARGE SCALE GENOMIC DNA]</scope>
    <source>
        <strain>PittEE</strain>
    </source>
</reference>
<accession>A5UDS2</accession>
<proteinExistence type="inferred from homology"/>
<protein>
    <recommendedName>
        <fullName evidence="1">DNA-directed RNA polymerase subunit alpha</fullName>
        <shortName evidence="1">RNAP subunit alpha</shortName>
        <ecNumber evidence="1">2.7.7.6</ecNumber>
    </recommendedName>
    <alternativeName>
        <fullName evidence="1">RNA polymerase subunit alpha</fullName>
    </alternativeName>
    <alternativeName>
        <fullName evidence="1">Transcriptase subunit alpha</fullName>
    </alternativeName>
</protein>
<sequence>MQGSVTEFLKPRLVDIEQISSTHAKVILEPLERGFGHTLGNALRRILLSSMPGCAVTEVEIDGVLHEYSSKEGVQEDILEVLLNLKGLAVKVQNKDDVILILNKSGIGPVVAADITHDGNVEIVNPDHVICHLTDENASISMRIRVQRGRGYVPASSRTHTQEERPIGRLLVDACYSPVERIAYNVEAARVEQRTDLDKLVIELETNGALEPEEAIRRAATILAEQLDAFVDLRDVRQPEIKEEKPEFDPILLRPVDDLELTVRSANCLKAETIHYIGDLVQRTEVELLKTPNLGKKSLTEIKDVLASRGLSLGMRLENWPPASIAED</sequence>
<comment type="function">
    <text evidence="1">DNA-dependent RNA polymerase catalyzes the transcription of DNA into RNA using the four ribonucleoside triphosphates as substrates.</text>
</comment>
<comment type="catalytic activity">
    <reaction evidence="1">
        <text>RNA(n) + a ribonucleoside 5'-triphosphate = RNA(n+1) + diphosphate</text>
        <dbReference type="Rhea" id="RHEA:21248"/>
        <dbReference type="Rhea" id="RHEA-COMP:14527"/>
        <dbReference type="Rhea" id="RHEA-COMP:17342"/>
        <dbReference type="ChEBI" id="CHEBI:33019"/>
        <dbReference type="ChEBI" id="CHEBI:61557"/>
        <dbReference type="ChEBI" id="CHEBI:140395"/>
        <dbReference type="EC" id="2.7.7.6"/>
    </reaction>
</comment>
<comment type="subunit">
    <text evidence="1">Homodimer. The RNAP catalytic core consists of 2 alpha, 1 beta, 1 beta' and 1 omega subunit. When a sigma factor is associated with the core the holoenzyme is formed, which can initiate transcription.</text>
</comment>
<comment type="domain">
    <text evidence="1">The N-terminal domain is essential for RNAP assembly and basal transcription, whereas the C-terminal domain is involved in interaction with transcriptional regulators and with upstream promoter elements.</text>
</comment>
<comment type="similarity">
    <text evidence="1">Belongs to the RNA polymerase alpha chain family.</text>
</comment>
<gene>
    <name evidence="1" type="primary">rpoA</name>
    <name type="ordered locus">CGSHiEE_08050</name>
</gene>
<dbReference type="EC" id="2.7.7.6" evidence="1"/>
<dbReference type="EMBL" id="CP000671">
    <property type="protein sequence ID" value="ABQ98923.1"/>
    <property type="molecule type" value="Genomic_DNA"/>
</dbReference>
<dbReference type="SMR" id="A5UDS2"/>
<dbReference type="KEGG" id="hip:CGSHiEE_08050"/>
<dbReference type="HOGENOM" id="CLU_053084_0_0_6"/>
<dbReference type="GO" id="GO:0005737">
    <property type="term" value="C:cytoplasm"/>
    <property type="evidence" value="ECO:0007669"/>
    <property type="project" value="UniProtKB-ARBA"/>
</dbReference>
<dbReference type="GO" id="GO:0000428">
    <property type="term" value="C:DNA-directed RNA polymerase complex"/>
    <property type="evidence" value="ECO:0007669"/>
    <property type="project" value="UniProtKB-KW"/>
</dbReference>
<dbReference type="GO" id="GO:0003677">
    <property type="term" value="F:DNA binding"/>
    <property type="evidence" value="ECO:0007669"/>
    <property type="project" value="UniProtKB-UniRule"/>
</dbReference>
<dbReference type="GO" id="GO:0003899">
    <property type="term" value="F:DNA-directed RNA polymerase activity"/>
    <property type="evidence" value="ECO:0007669"/>
    <property type="project" value="UniProtKB-UniRule"/>
</dbReference>
<dbReference type="GO" id="GO:0046983">
    <property type="term" value="F:protein dimerization activity"/>
    <property type="evidence" value="ECO:0007669"/>
    <property type="project" value="InterPro"/>
</dbReference>
<dbReference type="GO" id="GO:0006351">
    <property type="term" value="P:DNA-templated transcription"/>
    <property type="evidence" value="ECO:0007669"/>
    <property type="project" value="UniProtKB-UniRule"/>
</dbReference>
<dbReference type="CDD" id="cd06928">
    <property type="entry name" value="RNAP_alpha_NTD"/>
    <property type="match status" value="1"/>
</dbReference>
<dbReference type="FunFam" id="1.10.150.20:FF:000001">
    <property type="entry name" value="DNA-directed RNA polymerase subunit alpha"/>
    <property type="match status" value="1"/>
</dbReference>
<dbReference type="FunFam" id="2.170.120.12:FF:000001">
    <property type="entry name" value="DNA-directed RNA polymerase subunit alpha"/>
    <property type="match status" value="1"/>
</dbReference>
<dbReference type="Gene3D" id="1.10.150.20">
    <property type="entry name" value="5' to 3' exonuclease, C-terminal subdomain"/>
    <property type="match status" value="1"/>
</dbReference>
<dbReference type="Gene3D" id="2.170.120.12">
    <property type="entry name" value="DNA-directed RNA polymerase, insert domain"/>
    <property type="match status" value="1"/>
</dbReference>
<dbReference type="Gene3D" id="3.30.1360.10">
    <property type="entry name" value="RNA polymerase, RBP11-like subunit"/>
    <property type="match status" value="1"/>
</dbReference>
<dbReference type="HAMAP" id="MF_00059">
    <property type="entry name" value="RNApol_bact_RpoA"/>
    <property type="match status" value="1"/>
</dbReference>
<dbReference type="InterPro" id="IPR011262">
    <property type="entry name" value="DNA-dir_RNA_pol_insert"/>
</dbReference>
<dbReference type="InterPro" id="IPR011263">
    <property type="entry name" value="DNA-dir_RNA_pol_RpoA/D/Rpb3"/>
</dbReference>
<dbReference type="InterPro" id="IPR011773">
    <property type="entry name" value="DNA-dir_RpoA"/>
</dbReference>
<dbReference type="InterPro" id="IPR036603">
    <property type="entry name" value="RBP11-like"/>
</dbReference>
<dbReference type="InterPro" id="IPR011260">
    <property type="entry name" value="RNAP_asu_C"/>
</dbReference>
<dbReference type="InterPro" id="IPR036643">
    <property type="entry name" value="RNApol_insert_sf"/>
</dbReference>
<dbReference type="NCBIfam" id="NF003513">
    <property type="entry name" value="PRK05182.1-2"/>
    <property type="match status" value="1"/>
</dbReference>
<dbReference type="NCBIfam" id="NF003519">
    <property type="entry name" value="PRK05182.2-5"/>
    <property type="match status" value="1"/>
</dbReference>
<dbReference type="NCBIfam" id="TIGR02027">
    <property type="entry name" value="rpoA"/>
    <property type="match status" value="1"/>
</dbReference>
<dbReference type="Pfam" id="PF01000">
    <property type="entry name" value="RNA_pol_A_bac"/>
    <property type="match status" value="1"/>
</dbReference>
<dbReference type="Pfam" id="PF03118">
    <property type="entry name" value="RNA_pol_A_CTD"/>
    <property type="match status" value="1"/>
</dbReference>
<dbReference type="Pfam" id="PF01193">
    <property type="entry name" value="RNA_pol_L"/>
    <property type="match status" value="1"/>
</dbReference>
<dbReference type="SMART" id="SM00662">
    <property type="entry name" value="RPOLD"/>
    <property type="match status" value="1"/>
</dbReference>
<dbReference type="SUPFAM" id="SSF47789">
    <property type="entry name" value="C-terminal domain of RNA polymerase alpha subunit"/>
    <property type="match status" value="1"/>
</dbReference>
<dbReference type="SUPFAM" id="SSF56553">
    <property type="entry name" value="Insert subdomain of RNA polymerase alpha subunit"/>
    <property type="match status" value="1"/>
</dbReference>
<dbReference type="SUPFAM" id="SSF55257">
    <property type="entry name" value="RBP11-like subunits of RNA polymerase"/>
    <property type="match status" value="1"/>
</dbReference>
<feature type="chain" id="PRO_0000323636" description="DNA-directed RNA polymerase subunit alpha">
    <location>
        <begin position="1"/>
        <end position="328"/>
    </location>
</feature>
<feature type="region of interest" description="Alpha N-terminal domain (alpha-NTD)" evidence="1">
    <location>
        <begin position="1"/>
        <end position="234"/>
    </location>
</feature>
<feature type="region of interest" description="Alpha C-terminal domain (alpha-CTD)" evidence="1">
    <location>
        <begin position="248"/>
        <end position="328"/>
    </location>
</feature>